<geneLocation type="chloroplast"/>
<sequence>MFPMVTEFMNYGQQTVRAARYIGQGFMITLSHANRLPVTIQYPYEKLITSERFRGRIHFEFDKCIACEVCVRVCPIDLPVVDWKLETDIRKKRLLNYSIDFGICIFCGNCVEYCPTNCLSMTEEYELSTYDRHELNYNQIALGRLPMSIIDDYTIRTILNLPEIKT</sequence>
<proteinExistence type="inferred from homology"/>
<accession>Q8HVP3</accession>
<dbReference type="EC" id="7.1.1.-" evidence="1"/>
<dbReference type="EMBL" id="AF383820">
    <property type="protein sequence ID" value="AAN61761.1"/>
    <property type="molecule type" value="Genomic_DNA"/>
</dbReference>
<dbReference type="SMR" id="Q8HVP3"/>
<dbReference type="GO" id="GO:0009535">
    <property type="term" value="C:chloroplast thylakoid membrane"/>
    <property type="evidence" value="ECO:0007669"/>
    <property type="project" value="UniProtKB-SubCell"/>
</dbReference>
<dbReference type="GO" id="GO:0051539">
    <property type="term" value="F:4 iron, 4 sulfur cluster binding"/>
    <property type="evidence" value="ECO:0007669"/>
    <property type="project" value="UniProtKB-KW"/>
</dbReference>
<dbReference type="GO" id="GO:0005506">
    <property type="term" value="F:iron ion binding"/>
    <property type="evidence" value="ECO:0007669"/>
    <property type="project" value="UniProtKB-UniRule"/>
</dbReference>
<dbReference type="GO" id="GO:0008137">
    <property type="term" value="F:NADH dehydrogenase (ubiquinone) activity"/>
    <property type="evidence" value="ECO:0007669"/>
    <property type="project" value="InterPro"/>
</dbReference>
<dbReference type="GO" id="GO:0048038">
    <property type="term" value="F:quinone binding"/>
    <property type="evidence" value="ECO:0007669"/>
    <property type="project" value="UniProtKB-KW"/>
</dbReference>
<dbReference type="GO" id="GO:0019684">
    <property type="term" value="P:photosynthesis, light reaction"/>
    <property type="evidence" value="ECO:0007669"/>
    <property type="project" value="UniProtKB-UniRule"/>
</dbReference>
<dbReference type="FunFam" id="3.30.70.3270:FF:000006">
    <property type="entry name" value="NAD(P)H-quinone oxidoreductase subunit I, chloroplastic"/>
    <property type="match status" value="1"/>
</dbReference>
<dbReference type="Gene3D" id="3.30.70.3270">
    <property type="match status" value="1"/>
</dbReference>
<dbReference type="HAMAP" id="MF_01351">
    <property type="entry name" value="NDH1_NuoI"/>
    <property type="match status" value="1"/>
</dbReference>
<dbReference type="InterPro" id="IPR017896">
    <property type="entry name" value="4Fe4S_Fe-S-bd"/>
</dbReference>
<dbReference type="InterPro" id="IPR017900">
    <property type="entry name" value="4Fe4S_Fe_S_CS"/>
</dbReference>
<dbReference type="InterPro" id="IPR010226">
    <property type="entry name" value="NADH_quinone_OxRdtase_chainI"/>
</dbReference>
<dbReference type="InterPro" id="IPR004497">
    <property type="entry name" value="NDHI"/>
</dbReference>
<dbReference type="NCBIfam" id="TIGR00403">
    <property type="entry name" value="ndhI"/>
    <property type="match status" value="1"/>
</dbReference>
<dbReference type="NCBIfam" id="TIGR01971">
    <property type="entry name" value="NuoI"/>
    <property type="match status" value="1"/>
</dbReference>
<dbReference type="NCBIfam" id="NF004537">
    <property type="entry name" value="PRK05888.1-3"/>
    <property type="match status" value="1"/>
</dbReference>
<dbReference type="PANTHER" id="PTHR47275">
    <property type="entry name" value="NAD(P)H-QUINONE OXIDOREDUCTASE SUBUNIT I, CHLOROPLASTIC"/>
    <property type="match status" value="1"/>
</dbReference>
<dbReference type="PANTHER" id="PTHR47275:SF1">
    <property type="entry name" value="NAD(P)H-QUINONE OXIDOREDUCTASE SUBUNIT I, CHLOROPLASTIC"/>
    <property type="match status" value="1"/>
</dbReference>
<dbReference type="Pfam" id="PF00037">
    <property type="entry name" value="Fer4"/>
    <property type="match status" value="2"/>
</dbReference>
<dbReference type="SUPFAM" id="SSF54862">
    <property type="entry name" value="4Fe-4S ferredoxins"/>
    <property type="match status" value="1"/>
</dbReference>
<dbReference type="PROSITE" id="PS00198">
    <property type="entry name" value="4FE4S_FER_1"/>
    <property type="match status" value="2"/>
</dbReference>
<dbReference type="PROSITE" id="PS51379">
    <property type="entry name" value="4FE4S_FER_2"/>
    <property type="match status" value="2"/>
</dbReference>
<keyword id="KW-0004">4Fe-4S</keyword>
<keyword id="KW-0150">Chloroplast</keyword>
<keyword id="KW-0408">Iron</keyword>
<keyword id="KW-0411">Iron-sulfur</keyword>
<keyword id="KW-0472">Membrane</keyword>
<keyword id="KW-0479">Metal-binding</keyword>
<keyword id="KW-0520">NAD</keyword>
<keyword id="KW-0521">NADP</keyword>
<keyword id="KW-0934">Plastid</keyword>
<keyword id="KW-0618">Plastoquinone</keyword>
<keyword id="KW-0874">Quinone</keyword>
<keyword id="KW-0677">Repeat</keyword>
<keyword id="KW-0793">Thylakoid</keyword>
<keyword id="KW-1278">Translocase</keyword>
<organism>
    <name type="scientific">Monactis pallatangensis</name>
    <dbReference type="NCBI Taxonomy" id="183054"/>
    <lineage>
        <taxon>Eukaryota</taxon>
        <taxon>Viridiplantae</taxon>
        <taxon>Streptophyta</taxon>
        <taxon>Embryophyta</taxon>
        <taxon>Tracheophyta</taxon>
        <taxon>Spermatophyta</taxon>
        <taxon>Magnoliopsida</taxon>
        <taxon>eudicotyledons</taxon>
        <taxon>Gunneridae</taxon>
        <taxon>Pentapetalae</taxon>
        <taxon>asterids</taxon>
        <taxon>campanulids</taxon>
        <taxon>Asterales</taxon>
        <taxon>Asteraceae</taxon>
        <taxon>Asteroideae</taxon>
        <taxon>Heliantheae alliance</taxon>
        <taxon>Heliantheae</taxon>
        <taxon>Monactis</taxon>
    </lineage>
</organism>
<reference key="1">
    <citation type="submission" date="2003-01" db="EMBL/GenBank/DDBJ databases">
        <title>Chloroplast DNA phylogeny of tribe Heliantheae (Asteraceae).</title>
        <authorList>
            <person name="Panero J.L."/>
            <person name="Baldwin B.G."/>
            <person name="Schilling E.E."/>
            <person name="Clevinger J.A."/>
        </authorList>
    </citation>
    <scope>NUCLEOTIDE SEQUENCE [GENOMIC DNA]</scope>
</reference>
<protein>
    <recommendedName>
        <fullName evidence="1">NAD(P)H-quinone oxidoreductase subunit I, chloroplastic</fullName>
        <ecNumber evidence="1">7.1.1.-</ecNumber>
    </recommendedName>
    <alternativeName>
        <fullName evidence="1">NAD(P)H dehydrogenase subunit I</fullName>
        <shortName evidence="1">NDH subunit I</shortName>
    </alternativeName>
    <alternativeName>
        <fullName evidence="1">NADH-plastoquinone oxidoreductase subunit I</fullName>
    </alternativeName>
</protein>
<feature type="chain" id="PRO_0000250820" description="NAD(P)H-quinone oxidoreductase subunit I, chloroplastic">
    <location>
        <begin position="1"/>
        <end position="166"/>
    </location>
</feature>
<feature type="domain" description="4Fe-4S ferredoxin-type 1" evidence="1">
    <location>
        <begin position="55"/>
        <end position="84"/>
    </location>
</feature>
<feature type="domain" description="4Fe-4S ferredoxin-type 2" evidence="1">
    <location>
        <begin position="95"/>
        <end position="124"/>
    </location>
</feature>
<feature type="binding site" evidence="1">
    <location>
        <position position="64"/>
    </location>
    <ligand>
        <name>[4Fe-4S] cluster</name>
        <dbReference type="ChEBI" id="CHEBI:49883"/>
        <label>1</label>
    </ligand>
</feature>
<feature type="binding site" evidence="1">
    <location>
        <position position="67"/>
    </location>
    <ligand>
        <name>[4Fe-4S] cluster</name>
        <dbReference type="ChEBI" id="CHEBI:49883"/>
        <label>1</label>
    </ligand>
</feature>
<feature type="binding site" evidence="1">
    <location>
        <position position="70"/>
    </location>
    <ligand>
        <name>[4Fe-4S] cluster</name>
        <dbReference type="ChEBI" id="CHEBI:49883"/>
        <label>1</label>
    </ligand>
</feature>
<feature type="binding site" evidence="1">
    <location>
        <position position="74"/>
    </location>
    <ligand>
        <name>[4Fe-4S] cluster</name>
        <dbReference type="ChEBI" id="CHEBI:49883"/>
        <label>2</label>
    </ligand>
</feature>
<feature type="binding site" evidence="1">
    <location>
        <position position="104"/>
    </location>
    <ligand>
        <name>[4Fe-4S] cluster</name>
        <dbReference type="ChEBI" id="CHEBI:49883"/>
        <label>2</label>
    </ligand>
</feature>
<feature type="binding site" evidence="1">
    <location>
        <position position="107"/>
    </location>
    <ligand>
        <name>[4Fe-4S] cluster</name>
        <dbReference type="ChEBI" id="CHEBI:49883"/>
        <label>2</label>
    </ligand>
</feature>
<feature type="binding site" evidence="1">
    <location>
        <position position="110"/>
    </location>
    <ligand>
        <name>[4Fe-4S] cluster</name>
        <dbReference type="ChEBI" id="CHEBI:49883"/>
        <label>2</label>
    </ligand>
</feature>
<feature type="binding site" evidence="1">
    <location>
        <position position="114"/>
    </location>
    <ligand>
        <name>[4Fe-4S] cluster</name>
        <dbReference type="ChEBI" id="CHEBI:49883"/>
        <label>1</label>
    </ligand>
</feature>
<evidence type="ECO:0000255" key="1">
    <source>
        <dbReference type="HAMAP-Rule" id="MF_01351"/>
    </source>
</evidence>
<gene>
    <name evidence="1" type="primary">ndhI</name>
</gene>
<name>NDHI_MONPA</name>
<comment type="function">
    <text evidence="1">NDH shuttles electrons from NAD(P)H:plastoquinone, via FMN and iron-sulfur (Fe-S) centers, to quinones in the photosynthetic chain and possibly in a chloroplast respiratory chain. The immediate electron acceptor for the enzyme in this species is believed to be plastoquinone. Couples the redox reaction to proton translocation, and thus conserves the redox energy in a proton gradient.</text>
</comment>
<comment type="catalytic activity">
    <reaction evidence="1">
        <text>a plastoquinone + NADH + (n+1) H(+)(in) = a plastoquinol + NAD(+) + n H(+)(out)</text>
        <dbReference type="Rhea" id="RHEA:42608"/>
        <dbReference type="Rhea" id="RHEA-COMP:9561"/>
        <dbReference type="Rhea" id="RHEA-COMP:9562"/>
        <dbReference type="ChEBI" id="CHEBI:15378"/>
        <dbReference type="ChEBI" id="CHEBI:17757"/>
        <dbReference type="ChEBI" id="CHEBI:57540"/>
        <dbReference type="ChEBI" id="CHEBI:57945"/>
        <dbReference type="ChEBI" id="CHEBI:62192"/>
    </reaction>
</comment>
<comment type="catalytic activity">
    <reaction evidence="1">
        <text>a plastoquinone + NADPH + (n+1) H(+)(in) = a plastoquinol + NADP(+) + n H(+)(out)</text>
        <dbReference type="Rhea" id="RHEA:42612"/>
        <dbReference type="Rhea" id="RHEA-COMP:9561"/>
        <dbReference type="Rhea" id="RHEA-COMP:9562"/>
        <dbReference type="ChEBI" id="CHEBI:15378"/>
        <dbReference type="ChEBI" id="CHEBI:17757"/>
        <dbReference type="ChEBI" id="CHEBI:57783"/>
        <dbReference type="ChEBI" id="CHEBI:58349"/>
        <dbReference type="ChEBI" id="CHEBI:62192"/>
    </reaction>
</comment>
<comment type="cofactor">
    <cofactor evidence="1">
        <name>[4Fe-4S] cluster</name>
        <dbReference type="ChEBI" id="CHEBI:49883"/>
    </cofactor>
    <text evidence="1">Binds 2 [4Fe-4S] clusters per subunit.</text>
</comment>
<comment type="subunit">
    <text evidence="1">NDH is composed of at least 16 different subunits, 5 of which are encoded in the nucleus.</text>
</comment>
<comment type="subcellular location">
    <subcellularLocation>
        <location evidence="1">Plastid</location>
        <location evidence="1">Chloroplast thylakoid membrane</location>
        <topology evidence="1">Peripheral membrane protein</topology>
    </subcellularLocation>
</comment>
<comment type="similarity">
    <text evidence="1">Belongs to the complex I 23 kDa subunit family.</text>
</comment>